<accession>B0TJA4</accession>
<reference key="1">
    <citation type="submission" date="2008-01" db="EMBL/GenBank/DDBJ databases">
        <title>Complete sequence of Shewanella halifaxensis HAW-EB4.</title>
        <authorList>
            <consortium name="US DOE Joint Genome Institute"/>
            <person name="Copeland A."/>
            <person name="Lucas S."/>
            <person name="Lapidus A."/>
            <person name="Glavina del Rio T."/>
            <person name="Dalin E."/>
            <person name="Tice H."/>
            <person name="Bruce D."/>
            <person name="Goodwin L."/>
            <person name="Pitluck S."/>
            <person name="Sims D."/>
            <person name="Brettin T."/>
            <person name="Detter J.C."/>
            <person name="Han C."/>
            <person name="Kuske C.R."/>
            <person name="Schmutz J."/>
            <person name="Larimer F."/>
            <person name="Land M."/>
            <person name="Hauser L."/>
            <person name="Kyrpides N."/>
            <person name="Kim E."/>
            <person name="Zhao J.-S."/>
            <person name="Richardson P."/>
        </authorList>
    </citation>
    <scope>NUCLEOTIDE SEQUENCE [LARGE SCALE GENOMIC DNA]</scope>
    <source>
        <strain>HAW-EB4</strain>
    </source>
</reference>
<evidence type="ECO:0000255" key="1">
    <source>
        <dbReference type="HAMAP-Rule" id="MF_00652"/>
    </source>
</evidence>
<sequence length="257" mass="29060">MLILVSPAKTLDFDNPPGCESYSMPTLLDQSKQLIEVCRTLTPTDIATLMKVSDKIAGLNVARFSSWQKDFTPENAKQAVFAFRGDVYTGLDADTLSEASLQKAQKQLRILSGLYGLLKPLDLMQAYRLEMGTRLANDRGTNLYQFWGDIITDEINKTTEEQGDEFIINLASNEYFKAVKPKQLNAQVITPIFKDCKNGQYKVISFFAKKARGMMVRYILDNHVDSLEALIKFDTAGYYYSEKDSTVNEPVFLREAQ</sequence>
<feature type="chain" id="PRO_1000082778" description="UPF0246 protein Shal_1126">
    <location>
        <begin position="1"/>
        <end position="257"/>
    </location>
</feature>
<comment type="similarity">
    <text evidence="1">Belongs to the UPF0246 family.</text>
</comment>
<name>Y1126_SHEHH</name>
<organism>
    <name type="scientific">Shewanella halifaxensis (strain HAW-EB4)</name>
    <dbReference type="NCBI Taxonomy" id="458817"/>
    <lineage>
        <taxon>Bacteria</taxon>
        <taxon>Pseudomonadati</taxon>
        <taxon>Pseudomonadota</taxon>
        <taxon>Gammaproteobacteria</taxon>
        <taxon>Alteromonadales</taxon>
        <taxon>Shewanellaceae</taxon>
        <taxon>Shewanella</taxon>
    </lineage>
</organism>
<proteinExistence type="inferred from homology"/>
<protein>
    <recommendedName>
        <fullName evidence="1">UPF0246 protein Shal_1126</fullName>
    </recommendedName>
</protein>
<dbReference type="EMBL" id="CP000931">
    <property type="protein sequence ID" value="ABZ75695.1"/>
    <property type="molecule type" value="Genomic_DNA"/>
</dbReference>
<dbReference type="RefSeq" id="WP_012276240.1">
    <property type="nucleotide sequence ID" value="NC_010334.1"/>
</dbReference>
<dbReference type="SMR" id="B0TJA4"/>
<dbReference type="STRING" id="458817.Shal_1126"/>
<dbReference type="KEGG" id="shl:Shal_1126"/>
<dbReference type="eggNOG" id="COG3022">
    <property type="taxonomic scope" value="Bacteria"/>
</dbReference>
<dbReference type="HOGENOM" id="CLU_061989_0_0_6"/>
<dbReference type="OrthoDB" id="9777133at2"/>
<dbReference type="Proteomes" id="UP000001317">
    <property type="component" value="Chromosome"/>
</dbReference>
<dbReference type="GO" id="GO:0005829">
    <property type="term" value="C:cytosol"/>
    <property type="evidence" value="ECO:0007669"/>
    <property type="project" value="TreeGrafter"/>
</dbReference>
<dbReference type="GO" id="GO:0033194">
    <property type="term" value="P:response to hydroperoxide"/>
    <property type="evidence" value="ECO:0007669"/>
    <property type="project" value="TreeGrafter"/>
</dbReference>
<dbReference type="HAMAP" id="MF_00652">
    <property type="entry name" value="UPF0246"/>
    <property type="match status" value="1"/>
</dbReference>
<dbReference type="InterPro" id="IPR005583">
    <property type="entry name" value="YaaA"/>
</dbReference>
<dbReference type="NCBIfam" id="NF002541">
    <property type="entry name" value="PRK02101.1-1"/>
    <property type="match status" value="1"/>
</dbReference>
<dbReference type="NCBIfam" id="NF002542">
    <property type="entry name" value="PRK02101.1-3"/>
    <property type="match status" value="1"/>
</dbReference>
<dbReference type="PANTHER" id="PTHR30283:SF4">
    <property type="entry name" value="PEROXIDE STRESS RESISTANCE PROTEIN YAAA"/>
    <property type="match status" value="1"/>
</dbReference>
<dbReference type="PANTHER" id="PTHR30283">
    <property type="entry name" value="PEROXIDE STRESS RESPONSE PROTEIN YAAA"/>
    <property type="match status" value="1"/>
</dbReference>
<dbReference type="Pfam" id="PF03883">
    <property type="entry name" value="H2O2_YaaD"/>
    <property type="match status" value="1"/>
</dbReference>
<gene>
    <name type="ordered locus">Shal_1126</name>
</gene>